<accession>Q54BD5</accession>
<evidence type="ECO:0000250" key="1">
    <source>
        <dbReference type="UniProtKB" id="Q12383"/>
    </source>
</evidence>
<evidence type="ECO:0000255" key="2"/>
<evidence type="ECO:0000255" key="3">
    <source>
        <dbReference type="PROSITE-ProRule" id="PRU01141"/>
    </source>
</evidence>
<evidence type="ECO:0000256" key="4">
    <source>
        <dbReference type="SAM" id="MobiDB-lite"/>
    </source>
</evidence>
<evidence type="ECO:0000305" key="5"/>
<dbReference type="EC" id="2.1.1.225"/>
<dbReference type="EMBL" id="AAFI02000218">
    <property type="protein sequence ID" value="EAL60653.1"/>
    <property type="molecule type" value="Genomic_DNA"/>
</dbReference>
<dbReference type="RefSeq" id="XP_629094.1">
    <property type="nucleotide sequence ID" value="XM_629092.1"/>
</dbReference>
<dbReference type="FunCoup" id="Q54BD5">
    <property type="interactions" value="123"/>
</dbReference>
<dbReference type="STRING" id="44689.Q54BD5"/>
<dbReference type="PaxDb" id="44689-DDB0192091"/>
<dbReference type="EnsemblProtists" id="EAL60653">
    <property type="protein sequence ID" value="EAL60653"/>
    <property type="gene ID" value="DDB_G0293682"/>
</dbReference>
<dbReference type="GeneID" id="8629387"/>
<dbReference type="KEGG" id="ddi:DDB_G0293682"/>
<dbReference type="dictyBase" id="DDB_G0293682"/>
<dbReference type="VEuPathDB" id="AmoebaDB:DDB_G0293682"/>
<dbReference type="eggNOG" id="KOG2811">
    <property type="taxonomic scope" value="Eukaryota"/>
</dbReference>
<dbReference type="HOGENOM" id="CLU_027610_1_0_1"/>
<dbReference type="InParanoid" id="Q54BD5"/>
<dbReference type="OMA" id="HRCSWRS"/>
<dbReference type="PhylomeDB" id="Q54BD5"/>
<dbReference type="PRO" id="PR:Q54BD5"/>
<dbReference type="Proteomes" id="UP000002195">
    <property type="component" value="Chromosome 6"/>
</dbReference>
<dbReference type="GO" id="GO:0106050">
    <property type="term" value="F:tRNA 2'-O-methyltransferase activity"/>
    <property type="evidence" value="ECO:0007669"/>
    <property type="project" value="InterPro"/>
</dbReference>
<dbReference type="GO" id="GO:0008175">
    <property type="term" value="F:tRNA methyltransferase activity"/>
    <property type="evidence" value="ECO:0000318"/>
    <property type="project" value="GO_Central"/>
</dbReference>
<dbReference type="GO" id="GO:0008270">
    <property type="term" value="F:zinc ion binding"/>
    <property type="evidence" value="ECO:0007669"/>
    <property type="project" value="UniProtKB-KW"/>
</dbReference>
<dbReference type="GO" id="GO:0030488">
    <property type="term" value="P:tRNA methylation"/>
    <property type="evidence" value="ECO:0000318"/>
    <property type="project" value="GO_Central"/>
</dbReference>
<dbReference type="InterPro" id="IPR007871">
    <property type="entry name" value="Methyltransferase_TRM13"/>
</dbReference>
<dbReference type="InterPro" id="IPR039044">
    <property type="entry name" value="Trm13"/>
</dbReference>
<dbReference type="InterPro" id="IPR022776">
    <property type="entry name" value="TRM13/UPF0224_CHHC_Znf_dom"/>
</dbReference>
<dbReference type="InterPro" id="IPR021721">
    <property type="entry name" value="Znf_CCCH-type_TRM13"/>
</dbReference>
<dbReference type="PANTHER" id="PTHR12998">
    <property type="entry name" value="TRNA:M(4)X MODIFICATION ENZYME TRM13 HOMOLOG"/>
    <property type="match status" value="1"/>
</dbReference>
<dbReference type="PANTHER" id="PTHR12998:SF0">
    <property type="entry name" value="TRNA:M(4)X MODIFICATION ENZYME TRM13 HOMOLOG"/>
    <property type="match status" value="1"/>
</dbReference>
<dbReference type="Pfam" id="PF05206">
    <property type="entry name" value="TRM13"/>
    <property type="match status" value="1"/>
</dbReference>
<dbReference type="Pfam" id="PF11722">
    <property type="entry name" value="zf-TRM13_CCCH"/>
    <property type="match status" value="1"/>
</dbReference>
<dbReference type="Pfam" id="PF05253">
    <property type="entry name" value="zf-U11-48K"/>
    <property type="match status" value="1"/>
</dbReference>
<dbReference type="PROSITE" id="PS51800">
    <property type="entry name" value="ZF_CHHC_U11_48K"/>
    <property type="match status" value="1"/>
</dbReference>
<reference key="1">
    <citation type="journal article" date="2005" name="Nature">
        <title>The genome of the social amoeba Dictyostelium discoideum.</title>
        <authorList>
            <person name="Eichinger L."/>
            <person name="Pachebat J.A."/>
            <person name="Gloeckner G."/>
            <person name="Rajandream M.A."/>
            <person name="Sucgang R."/>
            <person name="Berriman M."/>
            <person name="Song J."/>
            <person name="Olsen R."/>
            <person name="Szafranski K."/>
            <person name="Xu Q."/>
            <person name="Tunggal B."/>
            <person name="Kummerfeld S."/>
            <person name="Madera M."/>
            <person name="Konfortov B.A."/>
            <person name="Rivero F."/>
            <person name="Bankier A.T."/>
            <person name="Lehmann R."/>
            <person name="Hamlin N."/>
            <person name="Davies R."/>
            <person name="Gaudet P."/>
            <person name="Fey P."/>
            <person name="Pilcher K."/>
            <person name="Chen G."/>
            <person name="Saunders D."/>
            <person name="Sodergren E.J."/>
            <person name="Davis P."/>
            <person name="Kerhornou A."/>
            <person name="Nie X."/>
            <person name="Hall N."/>
            <person name="Anjard C."/>
            <person name="Hemphill L."/>
            <person name="Bason N."/>
            <person name="Farbrother P."/>
            <person name="Desany B."/>
            <person name="Just E."/>
            <person name="Morio T."/>
            <person name="Rost R."/>
            <person name="Churcher C.M."/>
            <person name="Cooper J."/>
            <person name="Haydock S."/>
            <person name="van Driessche N."/>
            <person name="Cronin A."/>
            <person name="Goodhead I."/>
            <person name="Muzny D.M."/>
            <person name="Mourier T."/>
            <person name="Pain A."/>
            <person name="Lu M."/>
            <person name="Harper D."/>
            <person name="Lindsay R."/>
            <person name="Hauser H."/>
            <person name="James K.D."/>
            <person name="Quiles M."/>
            <person name="Madan Babu M."/>
            <person name="Saito T."/>
            <person name="Buchrieser C."/>
            <person name="Wardroper A."/>
            <person name="Felder M."/>
            <person name="Thangavelu M."/>
            <person name="Johnson D."/>
            <person name="Knights A."/>
            <person name="Loulseged H."/>
            <person name="Mungall K.L."/>
            <person name="Oliver K."/>
            <person name="Price C."/>
            <person name="Quail M.A."/>
            <person name="Urushihara H."/>
            <person name="Hernandez J."/>
            <person name="Rabbinowitsch E."/>
            <person name="Steffen D."/>
            <person name="Sanders M."/>
            <person name="Ma J."/>
            <person name="Kohara Y."/>
            <person name="Sharp S."/>
            <person name="Simmonds M.N."/>
            <person name="Spiegler S."/>
            <person name="Tivey A."/>
            <person name="Sugano S."/>
            <person name="White B."/>
            <person name="Walker D."/>
            <person name="Woodward J.R."/>
            <person name="Winckler T."/>
            <person name="Tanaka Y."/>
            <person name="Shaulsky G."/>
            <person name="Schleicher M."/>
            <person name="Weinstock G.M."/>
            <person name="Rosenthal A."/>
            <person name="Cox E.C."/>
            <person name="Chisholm R.L."/>
            <person name="Gibbs R.A."/>
            <person name="Loomis W.F."/>
            <person name="Platzer M."/>
            <person name="Kay R.R."/>
            <person name="Williams J.G."/>
            <person name="Dear P.H."/>
            <person name="Noegel A.A."/>
            <person name="Barrell B.G."/>
            <person name="Kuspa A."/>
        </authorList>
    </citation>
    <scope>NUCLEOTIDE SEQUENCE [LARGE SCALE GENOMIC DNA]</scope>
    <source>
        <strain>AX4</strain>
    </source>
</reference>
<sequence>MGEINNNKEINEKDDEINNKRLKYEGFIKKEKKKKQKIDHSIPLKEKPTQEDIDSHSECLFWIVNKKKHRAEFCKYKRAKDSILCNHHKPIDQISSEPQPQLTDYNGDDVTENNNNSTTTTTATTQDDNSKPKERKRIHCPLNPTHIIYECKLQKHLKACPNAKVGQKNAHIELSKKEPYYKENINDLNENVKLTLEPIILSQVSTENLINISIKLDQFFEKFFKNEIQSLNQTHKSFDKIFNSDQQLKHIQQESSIINLLENSNLYNSDNVYLEFGAGSGKLSNHIFMSHEKKSGHILIDRMKFRSLKKVDRLIKNEKGCHHFSRLLIDIRHLNLSNLSILEEKPFVITSKHLCGCATDFTLDSIFNLLNNSNEKVNNNFKGIGIATCCHHICNFNTYSNQSYLKDQLNITPLEFQLICSISSWATIDENKCNNDDDDNEVEEDDELIKKDKKEKKEFENQLKIEFNKQDVFSIKRKEELGYKAKRLIDYGRYLFIKEKLNLPNTKFWIYTNQSKENLFLVSNK</sequence>
<organism>
    <name type="scientific">Dictyostelium discoideum</name>
    <name type="common">Social amoeba</name>
    <dbReference type="NCBI Taxonomy" id="44689"/>
    <lineage>
        <taxon>Eukaryota</taxon>
        <taxon>Amoebozoa</taxon>
        <taxon>Evosea</taxon>
        <taxon>Eumycetozoa</taxon>
        <taxon>Dictyostelia</taxon>
        <taxon>Dictyosteliales</taxon>
        <taxon>Dictyosteliaceae</taxon>
        <taxon>Dictyostelium</taxon>
    </lineage>
</organism>
<feature type="chain" id="PRO_0000339430" description="tRNA:m(4)X modification enzyme TRM13 homolog">
    <location>
        <begin position="1"/>
        <end position="525"/>
    </location>
</feature>
<feature type="zinc finger region" description="CHHC U11-48K-type" evidence="3">
    <location>
        <begin position="137"/>
        <end position="164"/>
    </location>
</feature>
<feature type="region of interest" description="Disordered" evidence="4">
    <location>
        <begin position="31"/>
        <end position="50"/>
    </location>
</feature>
<feature type="region of interest" description="Disordered" evidence="4">
    <location>
        <begin position="91"/>
        <end position="137"/>
    </location>
</feature>
<feature type="coiled-coil region" evidence="2">
    <location>
        <begin position="440"/>
        <end position="469"/>
    </location>
</feature>
<feature type="compositionally biased region" description="Basic and acidic residues" evidence="4">
    <location>
        <begin position="38"/>
        <end position="50"/>
    </location>
</feature>
<feature type="compositionally biased region" description="Polar residues" evidence="4">
    <location>
        <begin position="93"/>
        <end position="104"/>
    </location>
</feature>
<feature type="compositionally biased region" description="Low complexity" evidence="4">
    <location>
        <begin position="112"/>
        <end position="127"/>
    </location>
</feature>
<feature type="binding site" evidence="3">
    <location>
        <position position="140"/>
    </location>
    <ligand>
        <name>Zn(2+)</name>
        <dbReference type="ChEBI" id="CHEBI:29105"/>
    </ligand>
</feature>
<feature type="binding site" evidence="3">
    <location>
        <position position="146"/>
    </location>
    <ligand>
        <name>Zn(2+)</name>
        <dbReference type="ChEBI" id="CHEBI:29105"/>
    </ligand>
</feature>
<feature type="binding site" evidence="3">
    <location>
        <position position="156"/>
    </location>
    <ligand>
        <name>Zn(2+)</name>
        <dbReference type="ChEBI" id="CHEBI:29105"/>
    </ligand>
</feature>
<feature type="binding site" evidence="3">
    <location>
        <position position="160"/>
    </location>
    <ligand>
        <name>Zn(2+)</name>
        <dbReference type="ChEBI" id="CHEBI:29105"/>
    </ligand>
</feature>
<proteinExistence type="inferred from homology"/>
<keyword id="KW-0175">Coiled coil</keyword>
<keyword id="KW-0479">Metal-binding</keyword>
<keyword id="KW-0489">Methyltransferase</keyword>
<keyword id="KW-1185">Reference proteome</keyword>
<keyword id="KW-0949">S-adenosyl-L-methionine</keyword>
<keyword id="KW-0808">Transferase</keyword>
<keyword id="KW-0819">tRNA processing</keyword>
<keyword id="KW-0862">Zinc</keyword>
<keyword id="KW-0863">Zinc-finger</keyword>
<comment type="function">
    <text evidence="1">tRNA methylase which 2'-O-methylates cytidine(4) in tRNA(Pro) and tRNA(Gly)(GCC), and adenosine(4) in tRNA(His).</text>
</comment>
<comment type="catalytic activity">
    <reaction evidence="1">
        <text>cytidine(4) in tRNA(Pro) + S-adenosyl-L-methionine = 2'-O-methylcytidine(4) in tRNA(Pro) + S-adenosyl-L-homocysteine + H(+)</text>
        <dbReference type="Rhea" id="RHEA:32767"/>
        <dbReference type="Rhea" id="RHEA-COMP:10397"/>
        <dbReference type="Rhea" id="RHEA-COMP:10398"/>
        <dbReference type="ChEBI" id="CHEBI:15378"/>
        <dbReference type="ChEBI" id="CHEBI:57856"/>
        <dbReference type="ChEBI" id="CHEBI:59789"/>
        <dbReference type="ChEBI" id="CHEBI:74495"/>
        <dbReference type="ChEBI" id="CHEBI:82748"/>
        <dbReference type="EC" id="2.1.1.225"/>
    </reaction>
</comment>
<comment type="catalytic activity">
    <reaction evidence="1">
        <text>cytidine(4) in tRNA(Gly)(GCC) + S-adenosyl-L-methionine = 2'-O-methylcytidine(4) in tRNA(Gly)(GCC) + S-adenosyl-L-homocysteine + H(+)</text>
        <dbReference type="Rhea" id="RHEA:43192"/>
        <dbReference type="Rhea" id="RHEA-COMP:10399"/>
        <dbReference type="Rhea" id="RHEA-COMP:10400"/>
        <dbReference type="ChEBI" id="CHEBI:15378"/>
        <dbReference type="ChEBI" id="CHEBI:57856"/>
        <dbReference type="ChEBI" id="CHEBI:59789"/>
        <dbReference type="ChEBI" id="CHEBI:74495"/>
        <dbReference type="ChEBI" id="CHEBI:82748"/>
        <dbReference type="EC" id="2.1.1.225"/>
    </reaction>
</comment>
<comment type="catalytic activity">
    <reaction evidence="1">
        <text>adenosine(4) in tRNA(His) + S-adenosyl-L-methionine = 2'-O-methyladenosine(4) in tRNA(His) + S-adenosyl-L-homocysteine + H(+)</text>
        <dbReference type="Rhea" id="RHEA:43196"/>
        <dbReference type="Rhea" id="RHEA-COMP:10401"/>
        <dbReference type="Rhea" id="RHEA-COMP:10402"/>
        <dbReference type="ChEBI" id="CHEBI:15378"/>
        <dbReference type="ChEBI" id="CHEBI:57856"/>
        <dbReference type="ChEBI" id="CHEBI:59789"/>
        <dbReference type="ChEBI" id="CHEBI:74411"/>
        <dbReference type="ChEBI" id="CHEBI:74477"/>
        <dbReference type="EC" id="2.1.1.225"/>
    </reaction>
</comment>
<comment type="similarity">
    <text evidence="5">Belongs to the methyltransferase TRM13 family.</text>
</comment>
<protein>
    <recommendedName>
        <fullName>tRNA:m(4)X modification enzyme TRM13 homolog</fullName>
        <ecNumber>2.1.1.225</ecNumber>
    </recommendedName>
</protein>
<name>TRM13_DICDI</name>
<gene>
    <name type="primary">trm13</name>
    <name type="ORF">DDB_G0293682</name>
</gene>